<name>ARNC_ERWT9</name>
<sequence length="325" mass="35983">MTEQSIKKVSVVIPVYNEQQSLPELMRRTDAACAQLALDYEILLVDDGSSDDSAAMLVAAAEAPDSHIVAVLLNRNYGQHSAIMAGFSHVSGDLVITLDADLQNPPEEIPRLVETAQQGYDVVGTVRQNRQDSGFRKIASRAINHLIQRATGKAMGDYGCMLRAYRRHIVDAMLNCHERSTFIPILANTFARQATEIPVLHAEREFGDSKYSLMSLINLMYDLITCLTTTPLRLLSVIGSVIALMGFAFSLLLIALRLFLGAEWAGDGVFMLFAVLFIFIGAQFVGMGLLGEYIGRIYNDVRARPRYFIQRVVSRDADSTKDKKS</sequence>
<keyword id="KW-0046">Antibiotic resistance</keyword>
<keyword id="KW-0997">Cell inner membrane</keyword>
<keyword id="KW-1003">Cell membrane</keyword>
<keyword id="KW-0328">Glycosyltransferase</keyword>
<keyword id="KW-0441">Lipid A biosynthesis</keyword>
<keyword id="KW-0444">Lipid biosynthesis</keyword>
<keyword id="KW-0443">Lipid metabolism</keyword>
<keyword id="KW-0448">Lipopolysaccharide biosynthesis</keyword>
<keyword id="KW-0472">Membrane</keyword>
<keyword id="KW-1185">Reference proteome</keyword>
<keyword id="KW-0808">Transferase</keyword>
<keyword id="KW-0812">Transmembrane</keyword>
<keyword id="KW-1133">Transmembrane helix</keyword>
<gene>
    <name evidence="1" type="primary">arnC</name>
    <name type="ordered locus">ETA_23820</name>
</gene>
<proteinExistence type="inferred from homology"/>
<organism>
    <name type="scientific">Erwinia tasmaniensis (strain DSM 17950 / CFBP 7177 / CIP 109463 / NCPPB 4357 / Et1/99)</name>
    <dbReference type="NCBI Taxonomy" id="465817"/>
    <lineage>
        <taxon>Bacteria</taxon>
        <taxon>Pseudomonadati</taxon>
        <taxon>Pseudomonadota</taxon>
        <taxon>Gammaproteobacteria</taxon>
        <taxon>Enterobacterales</taxon>
        <taxon>Erwiniaceae</taxon>
        <taxon>Erwinia</taxon>
    </lineage>
</organism>
<accession>B2VBJ0</accession>
<comment type="function">
    <text evidence="1">Catalyzes the transfer of 4-deoxy-4-formamido-L-arabinose from UDP to undecaprenyl phosphate. The modified arabinose is attached to lipid A and is required for resistance to polymyxin and cationic antimicrobial peptides.</text>
</comment>
<comment type="catalytic activity">
    <reaction evidence="1">
        <text>UDP-4-deoxy-4-formamido-beta-L-arabinose + di-trans,octa-cis-undecaprenyl phosphate = 4-deoxy-4-formamido-alpha-L-arabinopyranosyl di-trans,octa-cis-undecaprenyl phosphate + UDP</text>
        <dbReference type="Rhea" id="RHEA:27722"/>
        <dbReference type="ChEBI" id="CHEBI:58223"/>
        <dbReference type="ChEBI" id="CHEBI:58709"/>
        <dbReference type="ChEBI" id="CHEBI:58909"/>
        <dbReference type="ChEBI" id="CHEBI:60392"/>
        <dbReference type="EC" id="2.4.2.53"/>
    </reaction>
</comment>
<comment type="pathway">
    <text evidence="1">Glycolipid biosynthesis; 4-amino-4-deoxy-alpha-L-arabinose undecaprenyl phosphate biosynthesis; 4-amino-4-deoxy-alpha-L-arabinose undecaprenyl phosphate from UDP-4-deoxy-4-formamido-beta-L-arabinose and undecaprenyl phosphate: step 1/2.</text>
</comment>
<comment type="pathway">
    <text evidence="1">Bacterial outer membrane biogenesis; lipopolysaccharide biosynthesis.</text>
</comment>
<comment type="subcellular location">
    <subcellularLocation>
        <location evidence="1">Cell inner membrane</location>
        <topology evidence="1">Multi-pass membrane protein</topology>
    </subcellularLocation>
</comment>
<comment type="similarity">
    <text evidence="1">Belongs to the glycosyltransferase 2 family.</text>
</comment>
<protein>
    <recommendedName>
        <fullName evidence="1">Undecaprenyl-phosphate 4-deoxy-4-formamido-L-arabinose transferase</fullName>
        <ecNumber evidence="1">2.4.2.53</ecNumber>
    </recommendedName>
    <alternativeName>
        <fullName evidence="1">Undecaprenyl-phosphate Ara4FN transferase</fullName>
        <shortName evidence="1">Ara4FN transferase</shortName>
    </alternativeName>
</protein>
<feature type="chain" id="PRO_0000380261" description="Undecaprenyl-phosphate 4-deoxy-4-formamido-L-arabinose transferase">
    <location>
        <begin position="1"/>
        <end position="325"/>
    </location>
</feature>
<feature type="transmembrane region" description="Helical" evidence="1">
    <location>
        <begin position="234"/>
        <end position="254"/>
    </location>
</feature>
<feature type="transmembrane region" description="Helical" evidence="1">
    <location>
        <begin position="269"/>
        <end position="289"/>
    </location>
</feature>
<evidence type="ECO:0000255" key="1">
    <source>
        <dbReference type="HAMAP-Rule" id="MF_01164"/>
    </source>
</evidence>
<reference key="1">
    <citation type="journal article" date="2008" name="Environ. Microbiol.">
        <title>The genome of Erwinia tasmaniensis strain Et1/99, a non-pathogenic bacterium in the genus Erwinia.</title>
        <authorList>
            <person name="Kube M."/>
            <person name="Migdoll A.M."/>
            <person name="Mueller I."/>
            <person name="Kuhl H."/>
            <person name="Beck A."/>
            <person name="Reinhardt R."/>
            <person name="Geider K."/>
        </authorList>
    </citation>
    <scope>NUCLEOTIDE SEQUENCE [LARGE SCALE GENOMIC DNA]</scope>
    <source>
        <strain>DSM 17950 / CFBP 7177 / CIP 109463 / NCPPB 4357 / Et1/99</strain>
    </source>
</reference>
<dbReference type="EC" id="2.4.2.53" evidence="1"/>
<dbReference type="EMBL" id="CU468135">
    <property type="protein sequence ID" value="CAO97428.1"/>
    <property type="molecule type" value="Genomic_DNA"/>
</dbReference>
<dbReference type="RefSeq" id="WP_012442096.1">
    <property type="nucleotide sequence ID" value="NC_010694.1"/>
</dbReference>
<dbReference type="SMR" id="B2VBJ0"/>
<dbReference type="STRING" id="465817.ETA_23820"/>
<dbReference type="CAZy" id="GT2">
    <property type="family name" value="Glycosyltransferase Family 2"/>
</dbReference>
<dbReference type="KEGG" id="eta:ETA_23820"/>
<dbReference type="eggNOG" id="COG0463">
    <property type="taxonomic scope" value="Bacteria"/>
</dbReference>
<dbReference type="HOGENOM" id="CLU_033536_0_0_6"/>
<dbReference type="OrthoDB" id="9811884at2"/>
<dbReference type="UniPathway" id="UPA00030"/>
<dbReference type="UniPathway" id="UPA00036">
    <property type="reaction ID" value="UER00495"/>
</dbReference>
<dbReference type="Proteomes" id="UP000001726">
    <property type="component" value="Chromosome"/>
</dbReference>
<dbReference type="GO" id="GO:0005886">
    <property type="term" value="C:plasma membrane"/>
    <property type="evidence" value="ECO:0007669"/>
    <property type="project" value="UniProtKB-SubCell"/>
</dbReference>
<dbReference type="GO" id="GO:0016780">
    <property type="term" value="F:phosphotransferase activity, for other substituted phosphate groups"/>
    <property type="evidence" value="ECO:0007669"/>
    <property type="project" value="UniProtKB-UniRule"/>
</dbReference>
<dbReference type="GO" id="GO:0099621">
    <property type="term" value="F:undecaprenyl-phosphate 4-deoxy-4-formamido-L-arabinose transferase activity"/>
    <property type="evidence" value="ECO:0007669"/>
    <property type="project" value="UniProtKB-EC"/>
</dbReference>
<dbReference type="GO" id="GO:0036108">
    <property type="term" value="P:4-amino-4-deoxy-alpha-L-arabinopyranosyl undecaprenyl phosphate biosynthetic process"/>
    <property type="evidence" value="ECO:0007669"/>
    <property type="project" value="UniProtKB-UniRule"/>
</dbReference>
<dbReference type="GO" id="GO:0009245">
    <property type="term" value="P:lipid A biosynthetic process"/>
    <property type="evidence" value="ECO:0007669"/>
    <property type="project" value="UniProtKB-UniRule"/>
</dbReference>
<dbReference type="GO" id="GO:0009103">
    <property type="term" value="P:lipopolysaccharide biosynthetic process"/>
    <property type="evidence" value="ECO:0007669"/>
    <property type="project" value="UniProtKB-UniRule"/>
</dbReference>
<dbReference type="GO" id="GO:0046677">
    <property type="term" value="P:response to antibiotic"/>
    <property type="evidence" value="ECO:0007669"/>
    <property type="project" value="UniProtKB-KW"/>
</dbReference>
<dbReference type="CDD" id="cd04187">
    <property type="entry name" value="DPM1_like_bac"/>
    <property type="match status" value="1"/>
</dbReference>
<dbReference type="FunFam" id="3.90.550.10:FF:000019">
    <property type="entry name" value="Undecaprenyl-phosphate 4-deoxy-4-formamido-L-arabinose transferase"/>
    <property type="match status" value="1"/>
</dbReference>
<dbReference type="Gene3D" id="3.90.550.10">
    <property type="entry name" value="Spore Coat Polysaccharide Biosynthesis Protein SpsA, Chain A"/>
    <property type="match status" value="1"/>
</dbReference>
<dbReference type="HAMAP" id="MF_01164">
    <property type="entry name" value="ArnC_transfer"/>
    <property type="match status" value="1"/>
</dbReference>
<dbReference type="InterPro" id="IPR022857">
    <property type="entry name" value="ArnC_tfrase"/>
</dbReference>
<dbReference type="InterPro" id="IPR001173">
    <property type="entry name" value="Glyco_trans_2-like"/>
</dbReference>
<dbReference type="InterPro" id="IPR050256">
    <property type="entry name" value="Glycosyltransferase_2"/>
</dbReference>
<dbReference type="InterPro" id="IPR029044">
    <property type="entry name" value="Nucleotide-diphossugar_trans"/>
</dbReference>
<dbReference type="NCBIfam" id="NF007986">
    <property type="entry name" value="PRK10714.1"/>
    <property type="match status" value="1"/>
</dbReference>
<dbReference type="PANTHER" id="PTHR48090:SF3">
    <property type="entry name" value="UNDECAPRENYL-PHOSPHATE 4-DEOXY-4-FORMAMIDO-L-ARABINOSE TRANSFERASE"/>
    <property type="match status" value="1"/>
</dbReference>
<dbReference type="PANTHER" id="PTHR48090">
    <property type="entry name" value="UNDECAPRENYL-PHOSPHATE 4-DEOXY-4-FORMAMIDO-L-ARABINOSE TRANSFERASE-RELATED"/>
    <property type="match status" value="1"/>
</dbReference>
<dbReference type="Pfam" id="PF00535">
    <property type="entry name" value="Glycos_transf_2"/>
    <property type="match status" value="1"/>
</dbReference>
<dbReference type="SUPFAM" id="SSF53448">
    <property type="entry name" value="Nucleotide-diphospho-sugar transferases"/>
    <property type="match status" value="1"/>
</dbReference>